<feature type="chain" id="PRO_0000106137" description="ORF9b protein">
    <location>
        <begin position="1"/>
        <end position="98"/>
    </location>
</feature>
<feature type="domain" description="9b" evidence="1">
    <location>
        <begin position="9"/>
        <end position="98"/>
    </location>
</feature>
<feature type="short sequence motif" description="Nuclear export signal" evidence="3">
    <location>
        <begin position="46"/>
        <end position="54"/>
    </location>
</feature>
<feature type="sequence variant" description="In strain: Isolate TWK.">
    <original>A</original>
    <variation>V</variation>
    <location>
        <position position="58"/>
    </location>
</feature>
<feature type="strand" evidence="9">
    <location>
        <begin position="14"/>
        <end position="23"/>
    </location>
</feature>
<feature type="strand" evidence="9">
    <location>
        <begin position="42"/>
        <end position="47"/>
    </location>
</feature>
<feature type="strand" evidence="9">
    <location>
        <begin position="54"/>
        <end position="60"/>
    </location>
</feature>
<feature type="strand" evidence="9">
    <location>
        <begin position="65"/>
        <end position="67"/>
    </location>
</feature>
<feature type="strand" evidence="9">
    <location>
        <begin position="69"/>
        <end position="74"/>
    </location>
</feature>
<feature type="helix" evidence="9">
    <location>
        <begin position="85"/>
        <end position="87"/>
    </location>
</feature>
<feature type="strand" evidence="9">
    <location>
        <begin position="90"/>
        <end position="97"/>
    </location>
</feature>
<evidence type="ECO:0000255" key="1">
    <source>
        <dbReference type="PROSITE-ProRule" id="PRU01268"/>
    </source>
</evidence>
<evidence type="ECO:0000269" key="2">
    <source>
    </source>
</evidence>
<evidence type="ECO:0000269" key="3">
    <source>
    </source>
</evidence>
<evidence type="ECO:0000269" key="4">
    <source>
    </source>
</evidence>
<evidence type="ECO:0000269" key="5">
    <source>
    </source>
</evidence>
<evidence type="ECO:0000269" key="6">
    <source>
    </source>
</evidence>
<evidence type="ECO:0000269" key="7">
    <source>
    </source>
</evidence>
<evidence type="ECO:0000305" key="8"/>
<evidence type="ECO:0007829" key="9">
    <source>
        <dbReference type="PDB" id="2CME"/>
    </source>
</evidence>
<reference key="1">
    <citation type="journal article" date="2003" name="Science">
        <title>Characterization of a novel coronavirus associated with severe acute respiratory syndrome.</title>
        <authorList>
            <person name="Rota P.A."/>
            <person name="Oberste M.S."/>
            <person name="Monroe S.S."/>
            <person name="Nix W.A."/>
            <person name="Campagnoli R."/>
            <person name="Icenogle J.P."/>
            <person name="Penaranda S."/>
            <person name="Bankamp B."/>
            <person name="Maher K."/>
            <person name="Chen M.-H."/>
            <person name="Tong S."/>
            <person name="Tamin A."/>
            <person name="Lowe L."/>
            <person name="Frace M."/>
            <person name="DeRisi J.L."/>
            <person name="Chen Q."/>
            <person name="Wang D."/>
            <person name="Erdman D.D."/>
            <person name="Peret T.C.T."/>
            <person name="Burns C."/>
            <person name="Ksiazek T.G."/>
            <person name="Rollin P.E."/>
            <person name="Sanchez A."/>
            <person name="Liffick S."/>
            <person name="Holloway B."/>
            <person name="Limor J."/>
            <person name="McCaustland K."/>
            <person name="Olsen-Rasmussen M."/>
            <person name="Fouchier R."/>
            <person name="Guenther S."/>
            <person name="Osterhaus A.D.M.E."/>
            <person name="Drosten C."/>
            <person name="Pallansch M.A."/>
            <person name="Anderson L.J."/>
            <person name="Bellini W.J."/>
        </authorList>
    </citation>
    <scope>NUCLEOTIDE SEQUENCE [GENOMIC RNA]</scope>
    <source>
        <strain>Isolate Urbani</strain>
    </source>
</reference>
<reference key="2">
    <citation type="journal article" date="2003" name="Science">
        <title>The genome sequence of the SARS-associated coronavirus.</title>
        <authorList>
            <person name="Marra M.A."/>
            <person name="Jones S.J.M."/>
            <person name="Astell C.R."/>
            <person name="Holt R.A."/>
            <person name="Brooks-Wilson A."/>
            <person name="Butterfield Y.S.N."/>
            <person name="Khattra J."/>
            <person name="Asano J.K."/>
            <person name="Barber S.A."/>
            <person name="Chan S.Y."/>
            <person name="Cloutier A."/>
            <person name="Coughlin S.M."/>
            <person name="Freeman D."/>
            <person name="Girn N."/>
            <person name="Griffith O.L."/>
            <person name="Leach S.R."/>
            <person name="Mayo M."/>
            <person name="McDonald H."/>
            <person name="Montgomery S.B."/>
            <person name="Pandoh P.K."/>
            <person name="Petrescu A.S."/>
            <person name="Robertson A.G."/>
            <person name="Schein J.E."/>
            <person name="Siddiqui A."/>
            <person name="Smailus D.E."/>
            <person name="Stott J.M."/>
            <person name="Yang G.S."/>
            <person name="Plummer F."/>
            <person name="Andonov A."/>
            <person name="Artsob H."/>
            <person name="Bastien N."/>
            <person name="Bernard K."/>
            <person name="Booth T.F."/>
            <person name="Bowness D."/>
            <person name="Czub M."/>
            <person name="Drebot M."/>
            <person name="Fernando L."/>
            <person name="Flick R."/>
            <person name="Garbutt M."/>
            <person name="Gray M."/>
            <person name="Grolla A."/>
            <person name="Jones S."/>
            <person name="Feldmann H."/>
            <person name="Meyers A."/>
            <person name="Kabani A."/>
            <person name="Li Y."/>
            <person name="Normand S."/>
            <person name="Stroher U."/>
            <person name="Tipples G.A."/>
            <person name="Tyler S."/>
            <person name="Vogrig R."/>
            <person name="Ward D."/>
            <person name="Watson B."/>
            <person name="Brunham R.C."/>
            <person name="Krajden M."/>
            <person name="Petric M."/>
            <person name="Skowronski D.M."/>
            <person name="Upton C."/>
            <person name="Roper R.L."/>
        </authorList>
    </citation>
    <scope>NUCLEOTIDE SEQUENCE [GENOMIC RNA]</scope>
    <source>
        <strain>Isolate Tor2</strain>
    </source>
</reference>
<reference key="3">
    <citation type="journal article" date="2003" name="N. Engl. J. Med.">
        <title>Coronavirus genomic-sequence variations and the epidemiology of the severe acute respiratory syndrome.</title>
        <authorList>
            <person name="Tsui S.K.W."/>
            <person name="Chim S.S.C."/>
            <person name="Lo Y.M.D."/>
        </authorList>
    </citation>
    <scope>NUCLEOTIDE SEQUENCE [GENOMIC RNA]</scope>
    <source>
        <strain>Isolate CUHK-Su10</strain>
        <strain>Isolate CUHK-W1</strain>
    </source>
</reference>
<reference key="4">
    <citation type="journal article" date="2003" name="Exp. Biol. Med.">
        <title>The complete genome sequence of severe acute respiratory syndrome coronavirus strain HKU-39849 (HK-39).</title>
        <authorList>
            <person name="Zeng F.Y."/>
            <person name="Chan C.W."/>
            <person name="Chan M.N."/>
            <person name="Chen J.D."/>
            <person name="Chow K.Y.C."/>
            <person name="Hon C.C.C."/>
            <person name="Hui R.K.H."/>
            <person name="Li J."/>
            <person name="Li V.Y.Y."/>
            <person name="Wang C.Y."/>
            <person name="Wang P.Y."/>
            <person name="Guan Y."/>
            <person name="Zheng B."/>
            <person name="Poon L.L.M."/>
            <person name="Chan K.H."/>
            <person name="Yuen K.Y."/>
            <person name="Peiris J.S.M."/>
            <person name="Leung F.C."/>
        </authorList>
    </citation>
    <scope>NUCLEOTIDE SEQUENCE [GENOMIC RNA]</scope>
    <source>
        <strain>Isolate HKU-39849</strain>
    </source>
</reference>
<reference key="5">
    <citation type="submission" date="2003-04" db="EMBL/GenBank/DDBJ databases">
        <authorList>
            <person name="Qin E."/>
            <person name="Zhu Q."/>
            <person name="Yu M."/>
            <person name="Fan B."/>
            <person name="Chang G."/>
            <person name="Si B."/>
            <person name="Yang B."/>
            <person name="Peng W."/>
            <person name="Jiang T."/>
            <person name="Liu B."/>
            <person name="Deng Y."/>
            <person name="Liu H."/>
            <person name="Zhang Y."/>
            <person name="Wang C."/>
            <person name="Li Y."/>
            <person name="Gan Y."/>
            <person name="Li X."/>
            <person name="Lu F."/>
            <person name="Tan G."/>
            <person name="Yang R."/>
            <person name="Cao W.S."/>
            <person name="Wang J."/>
            <person name="Chen W."/>
            <person name="Cong L."/>
            <person name="Deng Y."/>
            <person name="Dong W."/>
            <person name="Han Y."/>
            <person name="Hu W."/>
            <person name="Lei M."/>
            <person name="Li C."/>
            <person name="Li G."/>
            <person name="Li G."/>
            <person name="Li H."/>
            <person name="Li S."/>
            <person name="Li S."/>
            <person name="Li W."/>
            <person name="Li W."/>
            <person name="Lin W."/>
            <person name="Liu J."/>
            <person name="Liu Z."/>
            <person name="Lu H."/>
            <person name="Ni P."/>
            <person name="Qi Q."/>
            <person name="Sun Y."/>
            <person name="Tang L."/>
            <person name="Tong Z."/>
            <person name="Wang J."/>
            <person name="Wang X."/>
            <person name="Wu Q."/>
            <person name="Xi Y."/>
            <person name="Xu Z."/>
            <person name="Yang L."/>
            <person name="Ye C."/>
            <person name="Ye J."/>
            <person name="Zhang B."/>
            <person name="Zhang F."/>
            <person name="Zhang J."/>
            <person name="Zhang X."/>
            <person name="Zhou J."/>
            <person name="Yang H."/>
        </authorList>
    </citation>
    <scope>NUCLEOTIDE SEQUENCE [GENOMIC RNA]</scope>
    <source>
        <strain>Isolate BJ01</strain>
        <strain>Isolate BJ02</strain>
        <strain>Isolate BJ03</strain>
        <strain>Isolate BJ04</strain>
        <strain>Isolate GD01</strain>
    </source>
</reference>
<reference key="6">
    <citation type="submission" date="2003-05" db="EMBL/GenBank/DDBJ databases">
        <title>The complete genome of SARS coronavirus clone TW1.</title>
        <authorList>
            <person name="Yeh S.-H."/>
            <person name="Kao C.-L."/>
            <person name="Tsai C.-Y."/>
            <person name="Liu C.-J."/>
            <person name="Chen D.-S."/>
            <person name="Chen P.-J."/>
        </authorList>
    </citation>
    <scope>NUCLEOTIDE SEQUENCE [GENOMIC RNA]</scope>
    <source>
        <strain>Isolate TW1</strain>
    </source>
</reference>
<reference key="7">
    <citation type="submission" date="2003-05" db="EMBL/GenBank/DDBJ databases">
        <title>SARS virus is a close relative of type II coronaviruses.</title>
        <authorList>
            <person name="Eickmann M."/>
            <person name="Becker S."/>
            <person name="Klenk H.-D."/>
            <person name="Doerr H.W."/>
            <person name="Stadler K."/>
            <person name="Censini S."/>
            <person name="Guidotti S."/>
            <person name="Masignani V."/>
            <person name="Scarselli M."/>
            <person name="Mora M."/>
            <person name="Donati C."/>
            <person name="Han J."/>
            <person name="Song H.C."/>
            <person name="Abrignani S."/>
            <person name="Covacci A."/>
            <person name="Rappuoli R."/>
        </authorList>
    </citation>
    <scope>NUCLEOTIDE SEQUENCE [GENOMIC RNA]</scope>
    <source>
        <strain>Isolate FRA</strain>
    </source>
</reference>
<reference key="8">
    <citation type="journal article" date="2003" name="J. Gen. Virol.">
        <title>Mechanisms and enzymes involved in SARS coronavirus genome expression.</title>
        <authorList>
            <person name="Thiel V."/>
            <person name="Ivanov K.A."/>
            <person name="Putics A."/>
            <person name="Hertzig T."/>
            <person name="Schelle B."/>
            <person name="Bayer S."/>
            <person name="Weissbrich B."/>
            <person name="Snijder E.J."/>
            <person name="Rabenau H."/>
            <person name="Doerr H.W."/>
            <person name="Gorbalenya A.E."/>
            <person name="Ziebuhr J."/>
        </authorList>
    </citation>
    <scope>NUCLEOTIDE SEQUENCE [GENOMIC RNA]</scope>
    <source>
        <strain>Isolate Frankfurt 1</strain>
    </source>
</reference>
<reference key="9">
    <citation type="journal article" date="2003" name="Chin. Med. J.">
        <title>Severe acute respiratory syndrome-associated coronavirus genotype and its characterization.</title>
        <authorList>
            <person name="Li L."/>
            <person name="Wang Z."/>
            <person name="Lu Y."/>
            <person name="Bao Q."/>
            <person name="Chen S."/>
            <person name="Wu N."/>
            <person name="Cheng S."/>
            <person name="Weng J."/>
            <person name="Zhang Y."/>
            <person name="Yan J."/>
            <person name="Mei L."/>
            <person name="Wang X."/>
            <person name="Zhu H."/>
            <person name="Yu Y."/>
            <person name="Zhang M."/>
            <person name="Li M."/>
            <person name="Yao J."/>
            <person name="Lu Q."/>
            <person name="Yao P."/>
            <person name="Bo X."/>
            <person name="Wo J."/>
            <person name="Wang S."/>
            <person name="Hu S."/>
        </authorList>
    </citation>
    <scope>NUCLEOTIDE SEQUENCE [GENOMIC RNA]</scope>
    <source>
        <strain>Isolate ZJ01</strain>
    </source>
</reference>
<reference key="10">
    <citation type="submission" date="2003-07" db="EMBL/GenBank/DDBJ databases">
        <title>The complete genome of SARS coronavirus TWH.</title>
        <authorList>
            <person name="Shu H.Y."/>
            <person name="Wu K.M."/>
            <person name="Tsai S.F."/>
        </authorList>
    </citation>
    <scope>NUCLEOTIDE SEQUENCE [GENOMIC RNA]</scope>
    <source>
        <strain>Isolate TWH</strain>
        <strain>Isolate TWJ</strain>
        <strain>Isolate TWK</strain>
        <strain>Isolate TWS</strain>
        <strain>Isolate TWY</strain>
    </source>
</reference>
<reference key="11">
    <citation type="submission" date="2003-07" db="EMBL/GenBank/DDBJ databases">
        <authorList>
            <person name="Canducci F."/>
            <person name="Clementi M."/>
            <person name="Poli G."/>
            <person name="Vicenzi E."/>
        </authorList>
    </citation>
    <scope>NUCLEOTIDE SEQUENCE [GENOMIC RNA]</scope>
    <source>
        <strain>Isolate HSR 1</strain>
    </source>
</reference>
<reference key="12">
    <citation type="submission" date="2003-10" db="EMBL/GenBank/DDBJ databases">
        <authorList>
            <person name="Balotta C."/>
            <person name="Corvasce S."/>
            <person name="Violin M."/>
            <person name="Galli M."/>
            <person name="Moroni M."/>
            <person name="Vigevani G.M."/>
            <person name="Ruan Y.J."/>
            <person name="Salemi M."/>
        </authorList>
    </citation>
    <scope>NUCLEOTIDE SEQUENCE [GENOMIC RNA]</scope>
    <source>
        <strain>Isolate AS</strain>
    </source>
</reference>
<reference key="13">
    <citation type="journal article" date="2007" name="Virus Res.">
        <title>Intracellular localization of the SARS coronavirus protein 9b: evidence of active export from the nucleus.</title>
        <authorList>
            <person name="Moshynskyy I."/>
            <person name="Viswanathan S."/>
            <person name="Vasilenko N."/>
            <person name="Lobanov V."/>
            <person name="Petric M."/>
            <person name="Babiuk L.A."/>
            <person name="Zakhartchouk A.N."/>
        </authorList>
    </citation>
    <scope>SUBCELLULAR LOCATION</scope>
    <scope>REGION</scope>
</reference>
<reference key="14">
    <citation type="journal article" date="2009" name="Virology">
        <title>Severe acute respiratory syndrome coronavirus accessory protein 9b is a virion-associated protein.</title>
        <authorList>
            <person name="Xu K."/>
            <person name="Zheng B.J."/>
            <person name="Zeng R."/>
            <person name="Lu W."/>
            <person name="Lin Y.P."/>
            <person name="Xue L."/>
            <person name="Li L."/>
            <person name="Yang L.L."/>
            <person name="Xu C."/>
            <person name="Dai J."/>
            <person name="Wang F."/>
            <person name="Li Q."/>
            <person name="Dong Q.X."/>
            <person name="Yang R.F."/>
            <person name="Wu J.R."/>
            <person name="Sun B."/>
        </authorList>
    </citation>
    <scope>SUBCELLULAR LOCATION</scope>
</reference>
<reference key="15">
    <citation type="journal article" date="2011" name="PLoS ONE">
        <title>SARS-CoV 9b protein diffuses into nucleus, undergoes active Crm1 mediated nucleocytoplasmic export and triggers apoptosis when retained in the nucleus.</title>
        <authorList>
            <person name="Sharma K."/>
            <person name="Aakerstroem S."/>
            <person name="Sharma A.K."/>
            <person name="Chow V.T."/>
            <person name="Teow S."/>
            <person name="Abrenica B."/>
            <person name="Booth S.A."/>
            <person name="Booth T.F."/>
            <person name="Mirazimi A."/>
            <person name="Lal S.K."/>
        </authorList>
    </citation>
    <scope>SUBCELLULAR LOCATION</scope>
    <scope>INTERACTION WITH HOST XPO1</scope>
</reference>
<reference key="16">
    <citation type="journal article" date="2014" name="J. Immunol.">
        <title>SARS-coronavirus open reading frame-9b suppresses innate immunity by targeting mitochondria and the MAVS/TRAF3/TRAF6 signalosome.</title>
        <authorList>
            <person name="Shi C.S."/>
            <person name="Qi H.Y."/>
            <person name="Boularan C."/>
            <person name="Huang N.N."/>
            <person name="Abu-Asab M."/>
            <person name="Shelhamer J.H."/>
            <person name="Kehrl J.H."/>
        </authorList>
    </citation>
    <scope>FUNCTION</scope>
    <scope>SUBCELLULAR LOCATION</scope>
    <scope>INTERACTION WITH HOST MAVS</scope>
</reference>
<reference key="17">
    <citation type="journal article" date="2012" name="Virus Res.">
        <title>Severe acute respiratory syndrome coronavirus accessory proteins 6 and 9b interact in vivo.</title>
        <authorList>
            <person name="Calvo E."/>
            <person name="DeDiego M.L."/>
            <person name="Garcia P."/>
            <person name="Lopez J.A."/>
            <person name="Perez-Brena P."/>
            <person name="Falcon A."/>
        </authorList>
    </citation>
    <scope>INTERACTION WITH PROTEIN ORF6</scope>
    <scope>SUBCELLULAR LOCATION</scope>
</reference>
<reference key="18">
    <citation type="journal article" date="2006" name="Structure">
        <title>The crystal structure of ORF-9b, a lipid binding protein from the SARS coronavirus.</title>
        <authorList>
            <person name="Meier C."/>
            <person name="Aricescu A.R."/>
            <person name="Assenberg R."/>
            <person name="Aplin R.T."/>
            <person name="Gilbert R.J.C."/>
            <person name="Grimes J.M."/>
            <person name="Stuart D.I."/>
        </authorList>
    </citation>
    <scope>X-RAY CRYSTALLOGRAPHY (2.8 ANGSTROMS) OF 9-98</scope>
    <scope>SUBCELLULAR LOCATION</scope>
</reference>
<proteinExistence type="evidence at protein level"/>
<organismHost>
    <name type="scientific">Homo sapiens</name>
    <name type="common">Human</name>
    <dbReference type="NCBI Taxonomy" id="9606"/>
</organismHost>
<organismHost>
    <name type="scientific">Paguma larvata</name>
    <name type="common">Masked palm civet</name>
    <dbReference type="NCBI Taxonomy" id="9675"/>
</organismHost>
<name>ORF9B_SARS</name>
<sequence length="98" mass="10802">MDPNQTNVVPPALHLVDPQIQLTITRMEDAMGQGQNSADPKVYPIILRLGSQLSLSMARRNLDSLEARAFQSTPIVVQMTKLATTEELPDEFVVVTAK</sequence>
<organism>
    <name type="scientific">Severe acute respiratory syndrome coronavirus</name>
    <name type="common">SARS-CoV</name>
    <dbReference type="NCBI Taxonomy" id="694009"/>
    <lineage>
        <taxon>Viruses</taxon>
        <taxon>Riboviria</taxon>
        <taxon>Orthornavirae</taxon>
        <taxon>Pisuviricota</taxon>
        <taxon>Pisoniviricetes</taxon>
        <taxon>Nidovirales</taxon>
        <taxon>Cornidovirineae</taxon>
        <taxon>Coronaviridae</taxon>
        <taxon>Orthocoronavirinae</taxon>
        <taxon>Betacoronavirus</taxon>
        <taxon>Sarbecovirus</taxon>
    </lineage>
</organism>
<protein>
    <recommendedName>
        <fullName>ORF9b protein</fullName>
    </recommendedName>
    <alternativeName>
        <fullName>Accessory protein 9b</fullName>
    </alternativeName>
    <alternativeName>
        <fullName>ORF-9b</fullName>
    </alternativeName>
    <alternativeName>
        <fullName>Protein 9b</fullName>
    </alternativeName>
</protein>
<keyword id="KW-0002">3D-structure</keyword>
<keyword id="KW-1035">Host cytoplasm</keyword>
<keyword id="KW-1036">Host cytoplasmic vesicle</keyword>
<keyword id="KW-1038">Host endoplasmic reticulum</keyword>
<keyword id="KW-1043">Host membrane</keyword>
<keyword id="KW-1045">Host mitochondrion</keyword>
<keyword id="KW-1048">Host nucleus</keyword>
<keyword id="KW-0945">Host-virus interaction</keyword>
<keyword id="KW-1090">Inhibition of host innate immune response by virus</keyword>
<keyword id="KW-1097">Inhibition of host MAVS by virus</keyword>
<keyword id="KW-1113">Inhibition of host RLR pathway by virus</keyword>
<keyword id="KW-0472">Membrane</keyword>
<keyword id="KW-1185">Reference proteome</keyword>
<keyword id="KW-0899">Viral immunoevasion</keyword>
<keyword id="KW-0946">Virion</keyword>
<gene>
    <name type="ORF">9b</name>
</gene>
<dbReference type="EMBL" id="AY278741">
    <property type="status" value="NOT_ANNOTATED_CDS"/>
    <property type="molecule type" value="Genomic_RNA"/>
</dbReference>
<dbReference type="EMBL" id="AY274119">
    <property type="protein sequence ID" value="AAP41048.1"/>
    <property type="molecule type" value="Genomic_RNA"/>
</dbReference>
<dbReference type="EMBL" id="AY282752">
    <property type="status" value="NOT_ANNOTATED_CDS"/>
    <property type="molecule type" value="Genomic_RNA"/>
</dbReference>
<dbReference type="EMBL" id="AY278554">
    <property type="protein sequence ID" value="AAP13574.1"/>
    <property type="molecule type" value="Genomic_RNA"/>
</dbReference>
<dbReference type="EMBL" id="AY278491">
    <property type="status" value="NOT_ANNOTATED_CDS"/>
    <property type="molecule type" value="Genomic_RNA"/>
</dbReference>
<dbReference type="EMBL" id="AY278487">
    <property type="status" value="NOT_ANNOTATED_CDS"/>
    <property type="molecule type" value="Genomic_RNA"/>
</dbReference>
<dbReference type="EMBL" id="AY278488">
    <property type="protein sequence ID" value="AAP30038.1"/>
    <property type="molecule type" value="Genomic_RNA"/>
</dbReference>
<dbReference type="EMBL" id="AY278489">
    <property type="protein sequence ID" value="AAP51235.1"/>
    <property type="molecule type" value="Genomic_RNA"/>
</dbReference>
<dbReference type="EMBL" id="AY278490">
    <property type="status" value="NOT_ANNOTATED_CDS"/>
    <property type="molecule type" value="Genomic_RNA"/>
</dbReference>
<dbReference type="EMBL" id="AY279354">
    <property type="status" value="NOT_ANNOTATED_CDS"/>
    <property type="molecule type" value="Genomic_RNA"/>
</dbReference>
<dbReference type="EMBL" id="AY291451">
    <property type="protein sequence ID" value="AAP37025.1"/>
    <property type="molecule type" value="Genomic_RNA"/>
</dbReference>
<dbReference type="EMBL" id="AY310120">
    <property type="protein sequence ID" value="AAP50496.1"/>
    <property type="molecule type" value="Genomic_RNA"/>
</dbReference>
<dbReference type="EMBL" id="AY291315">
    <property type="protein sequence ID" value="AAP33708.1"/>
    <property type="molecule type" value="Genomic_RNA"/>
</dbReference>
<dbReference type="EMBL" id="AY290752">
    <property type="protein sequence ID" value="AAP69659.1"/>
    <property type="molecule type" value="Genomic_RNA"/>
</dbReference>
<dbReference type="EMBL" id="AP006557">
    <property type="protein sequence ID" value="BAC81359.1"/>
    <property type="molecule type" value="Genomic_RNA"/>
</dbReference>
<dbReference type="EMBL" id="AP006558">
    <property type="protein sequence ID" value="BAC81373.1"/>
    <property type="molecule type" value="Genomic_RNA"/>
</dbReference>
<dbReference type="EMBL" id="AP006559">
    <property type="protein sequence ID" value="BAC81387.1"/>
    <property type="molecule type" value="Genomic_RNA"/>
</dbReference>
<dbReference type="EMBL" id="AP006560">
    <property type="protein sequence ID" value="BAC81401.1"/>
    <property type="molecule type" value="Genomic_RNA"/>
</dbReference>
<dbReference type="EMBL" id="AP006561">
    <property type="protein sequence ID" value="BAC81415.1"/>
    <property type="molecule type" value="Genomic_RNA"/>
</dbReference>
<dbReference type="EMBL" id="AY323977">
    <property type="protein sequence ID" value="AAP72985.1"/>
    <property type="molecule type" value="Genomic_RNA"/>
</dbReference>
<dbReference type="EMBL" id="AY427439">
    <property type="protein sequence ID" value="AAQ94071.1"/>
    <property type="molecule type" value="Genomic_RNA"/>
</dbReference>
<dbReference type="PDB" id="2CME">
    <property type="method" value="X-ray"/>
    <property type="resolution" value="2.80 A"/>
    <property type="chains" value="A/B=9-98, E/G=9-98, C/D/F/H=10-98"/>
</dbReference>
<dbReference type="PDBsum" id="2CME"/>
<dbReference type="SMR" id="P59636"/>
<dbReference type="BioGRID" id="4383924">
    <property type="interactions" value="78"/>
</dbReference>
<dbReference type="ComplexPortal" id="CPX-6101">
    <property type="entry name" value="SARS-CoV 9b complex"/>
</dbReference>
<dbReference type="IntAct" id="P59636">
    <property type="interactions" value="28"/>
</dbReference>
<dbReference type="DNASU" id="1489679"/>
<dbReference type="Reactome" id="R-HSA-9679504">
    <property type="pathway name" value="Translation of Replicase and Assembly of the Replication Transcription Complex"/>
</dbReference>
<dbReference type="Reactome" id="R-HSA-9692916">
    <property type="pathway name" value="SARS-CoV-1 activates/modulates innate immune responses"/>
</dbReference>
<dbReference type="SIGNOR" id="P59636"/>
<dbReference type="EvolutionaryTrace" id="P59636"/>
<dbReference type="Proteomes" id="UP000000354">
    <property type="component" value="Segment"/>
</dbReference>
<dbReference type="Proteomes" id="UP000103670">
    <property type="component" value="Segment"/>
</dbReference>
<dbReference type="Proteomes" id="UP000109640">
    <property type="component" value="Segment"/>
</dbReference>
<dbReference type="Proteomes" id="UP000116947">
    <property type="component" value="Segment"/>
</dbReference>
<dbReference type="Proteomes" id="UP000121636">
    <property type="component" value="Segment"/>
</dbReference>
<dbReference type="Proteomes" id="UP000131569">
    <property type="component" value="Segment"/>
</dbReference>
<dbReference type="Proteomes" id="UP000131955">
    <property type="component" value="Segment"/>
</dbReference>
<dbReference type="Proteomes" id="UP000137377">
    <property type="component" value="Genome"/>
</dbReference>
<dbReference type="Proteomes" id="UP000138690">
    <property type="component" value="Segment"/>
</dbReference>
<dbReference type="Proteomes" id="UP000145651">
    <property type="component" value="Segment"/>
</dbReference>
<dbReference type="Proteomes" id="UP000146108">
    <property type="component" value="Segment"/>
</dbReference>
<dbReference type="Proteomes" id="UP000148194">
    <property type="component" value="Segment"/>
</dbReference>
<dbReference type="Proteomes" id="UP000153467">
    <property type="component" value="Segment"/>
</dbReference>
<dbReference type="Proteomes" id="UP000160648">
    <property type="component" value="Segment"/>
</dbReference>
<dbReference type="Proteomes" id="UP000172416">
    <property type="component" value="Segment"/>
</dbReference>
<dbReference type="Proteomes" id="UP000180358">
    <property type="component" value="Segment"/>
</dbReference>
<dbReference type="GO" id="GO:0044162">
    <property type="term" value="C:host cell cytoplasmic vesicle membrane"/>
    <property type="evidence" value="ECO:0007669"/>
    <property type="project" value="UniProtKB-SubCell"/>
</dbReference>
<dbReference type="GO" id="GO:0044165">
    <property type="term" value="C:host cell endoplasmic reticulum"/>
    <property type="evidence" value="ECO:0000314"/>
    <property type="project" value="UniProtKB"/>
</dbReference>
<dbReference type="GO" id="GO:0033650">
    <property type="term" value="C:host cell mitochondrion"/>
    <property type="evidence" value="ECO:0000314"/>
    <property type="project" value="UniProtKB"/>
</dbReference>
<dbReference type="GO" id="GO:0042025">
    <property type="term" value="C:host cell nucleus"/>
    <property type="evidence" value="ECO:0007669"/>
    <property type="project" value="UniProtKB-SubCell"/>
</dbReference>
<dbReference type="GO" id="GO:0005741">
    <property type="term" value="C:mitochondrial outer membrane"/>
    <property type="evidence" value="ECO:0000314"/>
    <property type="project" value="ComplexPortal"/>
</dbReference>
<dbReference type="GO" id="GO:0098799">
    <property type="term" value="C:outer mitochondrial membrane protein complex"/>
    <property type="evidence" value="ECO:0000353"/>
    <property type="project" value="ComplexPortal"/>
</dbReference>
<dbReference type="GO" id="GO:0044423">
    <property type="term" value="C:virion component"/>
    <property type="evidence" value="ECO:0000314"/>
    <property type="project" value="UniProtKB"/>
</dbReference>
<dbReference type="GO" id="GO:0042802">
    <property type="term" value="F:identical protein binding"/>
    <property type="evidence" value="ECO:0000353"/>
    <property type="project" value="IntAct"/>
</dbReference>
<dbReference type="GO" id="GO:0050687">
    <property type="term" value="P:negative regulation of defense response to virus"/>
    <property type="evidence" value="ECO:0000314"/>
    <property type="project" value="ComplexPortal"/>
</dbReference>
<dbReference type="GO" id="GO:0090258">
    <property type="term" value="P:negative regulation of mitochondrial fission"/>
    <property type="evidence" value="ECO:0000314"/>
    <property type="project" value="ComplexPortal"/>
</dbReference>
<dbReference type="GO" id="GO:2000786">
    <property type="term" value="P:positive regulation of autophagosome assembly"/>
    <property type="evidence" value="ECO:0000314"/>
    <property type="project" value="ComplexPortal"/>
</dbReference>
<dbReference type="GO" id="GO:0039545">
    <property type="term" value="P:symbiont-mediated suppression of host cytoplasmic pattern recognition receptor signaling pathway via inhibition of MAVS activity"/>
    <property type="evidence" value="ECO:0000314"/>
    <property type="project" value="UniProtKB"/>
</dbReference>
<dbReference type="GO" id="GO:0039502">
    <property type="term" value="P:symbiont-mediated suppression of host type I interferon-mediated signaling pathway"/>
    <property type="evidence" value="ECO:0000314"/>
    <property type="project" value="ComplexPortal"/>
</dbReference>
<dbReference type="CDD" id="cd21955">
    <property type="entry name" value="SARS-CoV_ORF9b"/>
    <property type="match status" value="1"/>
</dbReference>
<dbReference type="DisProt" id="DP03002"/>
<dbReference type="InterPro" id="IPR018542">
    <property type="entry name" value="Protein_9b_Betacoronavirus"/>
</dbReference>
<dbReference type="InterPro" id="IPR037223">
    <property type="entry name" value="Protein_9b_SARS"/>
</dbReference>
<dbReference type="Pfam" id="PF09399">
    <property type="entry name" value="bCoV_lipid_BD"/>
    <property type="match status" value="1"/>
</dbReference>
<dbReference type="SUPFAM" id="SSF141666">
    <property type="entry name" value="SARS ORF9b-like"/>
    <property type="match status" value="1"/>
</dbReference>
<dbReference type="PROSITE" id="PS51920">
    <property type="entry name" value="SARS_9B"/>
    <property type="match status" value="1"/>
</dbReference>
<comment type="function">
    <text evidence="7">Plays a role in the inhibition of host innate immune response by targeting the mitochondrial-associated adapter MAVS. Mechanistically, usurps the E3 ligase ITCH to trigger the degradation of MAVS, TRAF3, and TRAF6. In addition, causes mitochondrial elongation by triggering ubiquitination and proteasomal degradation of dynamin-like protein 1/DNM1L.</text>
</comment>
<comment type="subunit">
    <text evidence="5 6 7">Homodimer. Interacts with host XPO1; this interaction mediates protein ORF9b export out of the nucleus (PubMed:21637748). Interacts with host MAVS (PubMed:25135833). Interacts with protein ORF6 (PubMed:22820404).</text>
</comment>
<comment type="interaction">
    <interactant intactId="EBI-9021274">
        <id>P59636</id>
    </interactant>
    <interactant intactId="EBI-9021274">
        <id>P59636</id>
        <label>9b</label>
    </interactant>
    <organismsDiffer>false</organismsDiffer>
    <experiments>6</experiments>
</comment>
<comment type="interaction">
    <interactant intactId="EBI-9021274">
        <id>P59636</id>
    </interactant>
    <interactant intactId="EBI-25488942">
        <id>Q7TLC7</id>
        <label>ORF14</label>
    </interactant>
    <organismsDiffer>false</organismsDiffer>
    <experiments>3</experiments>
</comment>
<comment type="interaction">
    <interactant intactId="EBI-9021274">
        <id>P59636</id>
    </interactant>
    <interactant intactId="EBI-25487328">
        <id>PRO_0000037320</id>
        <label>rep</label>
        <dbReference type="UniProtKB" id="P0C6X7"/>
    </interactant>
    <organismsDiffer>false</organismsDiffer>
    <experiments>3</experiments>
</comment>
<comment type="interaction">
    <interactant intactId="EBI-9021274">
        <id>P59636</id>
    </interactant>
    <interactant intactId="EBI-995373">
        <id>Q7Z434</id>
        <label>MAVS</label>
    </interactant>
    <organismsDiffer>true</organismsDiffer>
    <experiments>5</experiments>
</comment>
<comment type="interaction">
    <interactant intactId="EBI-9021274">
        <id>P59636</id>
    </interactant>
    <interactant intactId="EBI-2800236">
        <id>O94826</id>
        <label>TOMM70</label>
    </interactant>
    <organismsDiffer>true</organismsDiffer>
    <experiments>7</experiments>
</comment>
<comment type="subcellular location">
    <subcellularLocation>
        <location evidence="4">Virion</location>
    </subcellularLocation>
    <subcellularLocation>
        <location evidence="2">Host cytoplasmic vesicle membrane</location>
        <topology evidence="2">Peripheral membrane protein</topology>
    </subcellularLocation>
    <subcellularLocation>
        <location evidence="2 5 6">Host cytoplasm</location>
    </subcellularLocation>
    <subcellularLocation>
        <location evidence="3">Host endoplasmic reticulum</location>
    </subcellularLocation>
    <subcellularLocation>
        <location evidence="5">Host nucleus</location>
    </subcellularLocation>
    <subcellularLocation>
        <location evidence="7">Host mitochondrion</location>
    </subcellularLocation>
    <text>Binds non-covalently to intracellular lipid bilayers.</text>
</comment>
<comment type="miscellaneous">
    <text>The gene encoding this protein is included within the N gene (alternative ORF).</text>
</comment>
<comment type="similarity">
    <text evidence="8">Belongs to the coronavirus group 2 protein 9b family.</text>
</comment>
<accession>P59636</accession>
<accession>Q7T6R2</accession>